<accession>A1KWD5</accession>
<organism>
    <name type="scientific">Neisseria meningitidis serogroup C / serotype 2a (strain ATCC 700532 / DSM 15464 / FAM18)</name>
    <dbReference type="NCBI Taxonomy" id="272831"/>
    <lineage>
        <taxon>Bacteria</taxon>
        <taxon>Pseudomonadati</taxon>
        <taxon>Pseudomonadota</taxon>
        <taxon>Betaproteobacteria</taxon>
        <taxon>Neisseriales</taxon>
        <taxon>Neisseriaceae</taxon>
        <taxon>Neisseria</taxon>
    </lineage>
</organism>
<feature type="chain" id="PRO_1000051266" description="Small ribosomal subunit protein uS9">
    <location>
        <begin position="1"/>
        <end position="130"/>
    </location>
</feature>
<reference key="1">
    <citation type="journal article" date="2007" name="PLoS Genet.">
        <title>Meningococcal genetic variation mechanisms viewed through comparative analysis of serogroup C strain FAM18.</title>
        <authorList>
            <person name="Bentley S.D."/>
            <person name="Vernikos G.S."/>
            <person name="Snyder L.A.S."/>
            <person name="Churcher C."/>
            <person name="Arrowsmith C."/>
            <person name="Chillingworth T."/>
            <person name="Cronin A."/>
            <person name="Davis P.H."/>
            <person name="Holroyd N.E."/>
            <person name="Jagels K."/>
            <person name="Maddison M."/>
            <person name="Moule S."/>
            <person name="Rabbinowitsch E."/>
            <person name="Sharp S."/>
            <person name="Unwin L."/>
            <person name="Whitehead S."/>
            <person name="Quail M.A."/>
            <person name="Achtman M."/>
            <person name="Barrell B.G."/>
            <person name="Saunders N.J."/>
            <person name="Parkhill J."/>
        </authorList>
    </citation>
    <scope>NUCLEOTIDE SEQUENCE [LARGE SCALE GENOMIC DNA]</scope>
    <source>
        <strain>ATCC 700532 / DSM 15464 / FAM18</strain>
    </source>
</reference>
<gene>
    <name evidence="1" type="primary">rpsI</name>
    <name type="ordered locus">NMC2037</name>
</gene>
<proteinExistence type="inferred from homology"/>
<dbReference type="EMBL" id="AM421808">
    <property type="protein sequence ID" value="CAM11192.1"/>
    <property type="molecule type" value="Genomic_DNA"/>
</dbReference>
<dbReference type="RefSeq" id="WP_002215008.1">
    <property type="nucleotide sequence ID" value="NC_008767.1"/>
</dbReference>
<dbReference type="SMR" id="A1KWD5"/>
<dbReference type="GeneID" id="93386983"/>
<dbReference type="KEGG" id="nmc:NMC2037"/>
<dbReference type="HOGENOM" id="CLU_046483_2_1_4"/>
<dbReference type="Proteomes" id="UP000002286">
    <property type="component" value="Chromosome"/>
</dbReference>
<dbReference type="GO" id="GO:0022627">
    <property type="term" value="C:cytosolic small ribosomal subunit"/>
    <property type="evidence" value="ECO:0007669"/>
    <property type="project" value="TreeGrafter"/>
</dbReference>
<dbReference type="GO" id="GO:0003723">
    <property type="term" value="F:RNA binding"/>
    <property type="evidence" value="ECO:0007669"/>
    <property type="project" value="TreeGrafter"/>
</dbReference>
<dbReference type="GO" id="GO:0003735">
    <property type="term" value="F:structural constituent of ribosome"/>
    <property type="evidence" value="ECO:0007669"/>
    <property type="project" value="InterPro"/>
</dbReference>
<dbReference type="GO" id="GO:0006412">
    <property type="term" value="P:translation"/>
    <property type="evidence" value="ECO:0007669"/>
    <property type="project" value="UniProtKB-UniRule"/>
</dbReference>
<dbReference type="FunFam" id="3.30.230.10:FF:000001">
    <property type="entry name" value="30S ribosomal protein S9"/>
    <property type="match status" value="1"/>
</dbReference>
<dbReference type="Gene3D" id="3.30.230.10">
    <property type="match status" value="1"/>
</dbReference>
<dbReference type="HAMAP" id="MF_00532_B">
    <property type="entry name" value="Ribosomal_uS9_B"/>
    <property type="match status" value="1"/>
</dbReference>
<dbReference type="InterPro" id="IPR020568">
    <property type="entry name" value="Ribosomal_Su5_D2-typ_SF"/>
</dbReference>
<dbReference type="InterPro" id="IPR000754">
    <property type="entry name" value="Ribosomal_uS9"/>
</dbReference>
<dbReference type="InterPro" id="IPR023035">
    <property type="entry name" value="Ribosomal_uS9_bac/plastid"/>
</dbReference>
<dbReference type="InterPro" id="IPR020574">
    <property type="entry name" value="Ribosomal_uS9_CS"/>
</dbReference>
<dbReference type="InterPro" id="IPR014721">
    <property type="entry name" value="Ribsml_uS5_D2-typ_fold_subgr"/>
</dbReference>
<dbReference type="NCBIfam" id="NF001099">
    <property type="entry name" value="PRK00132.1"/>
    <property type="match status" value="1"/>
</dbReference>
<dbReference type="PANTHER" id="PTHR21569">
    <property type="entry name" value="RIBOSOMAL PROTEIN S9"/>
    <property type="match status" value="1"/>
</dbReference>
<dbReference type="PANTHER" id="PTHR21569:SF1">
    <property type="entry name" value="SMALL RIBOSOMAL SUBUNIT PROTEIN US9M"/>
    <property type="match status" value="1"/>
</dbReference>
<dbReference type="Pfam" id="PF00380">
    <property type="entry name" value="Ribosomal_S9"/>
    <property type="match status" value="1"/>
</dbReference>
<dbReference type="SUPFAM" id="SSF54211">
    <property type="entry name" value="Ribosomal protein S5 domain 2-like"/>
    <property type="match status" value="1"/>
</dbReference>
<dbReference type="PROSITE" id="PS00360">
    <property type="entry name" value="RIBOSOMAL_S9"/>
    <property type="match status" value="1"/>
</dbReference>
<sequence length="130" mass="14426">MNGKYYYGTGRRKSSVARVFLIKGTGQIIVNGRPVDEFFARETSRMVVRQPLVLTENAESFDIKVNVVGGGETGQSGAIRHGITRALIDFDAALKPALSQAGFVTRDAREVERKKPGLRKARRAKQFSKR</sequence>
<keyword id="KW-0687">Ribonucleoprotein</keyword>
<keyword id="KW-0689">Ribosomal protein</keyword>
<comment type="similarity">
    <text evidence="1">Belongs to the universal ribosomal protein uS9 family.</text>
</comment>
<protein>
    <recommendedName>
        <fullName evidence="1">Small ribosomal subunit protein uS9</fullName>
    </recommendedName>
    <alternativeName>
        <fullName evidence="2">30S ribosomal protein S9</fullName>
    </alternativeName>
</protein>
<evidence type="ECO:0000255" key="1">
    <source>
        <dbReference type="HAMAP-Rule" id="MF_00532"/>
    </source>
</evidence>
<evidence type="ECO:0000305" key="2"/>
<name>RS9_NEIMF</name>